<proteinExistence type="evidence at protein level"/>
<accession>Q96IT1</accession>
<accession>Q8TBS2</accession>
<comment type="function">
    <text evidence="1">DNA-binding transcription factor that can both act as an activator and a repressor.</text>
</comment>
<comment type="subunit">
    <text evidence="1">Interacts (via zinc-fingers) with JARID2. Interacts with NSD1 (By similarity).</text>
</comment>
<comment type="interaction">
    <interactant intactId="EBI-743906">
        <id>Q96IT1</id>
    </interactant>
    <interactant intactId="EBI-718116">
        <id>P36575</id>
        <label>ARR3</label>
    </interactant>
    <organismsDiffer>false</organismsDiffer>
    <experiments>6</experiments>
</comment>
<comment type="interaction">
    <interactant intactId="EBI-743906">
        <id>Q96IT1</id>
    </interactant>
    <interactant intactId="EBI-11977533">
        <id>P36575-2</id>
        <label>ARR3</label>
    </interactant>
    <organismsDiffer>false</organismsDiffer>
    <experiments>3</experiments>
</comment>
<comment type="interaction">
    <interactant intactId="EBI-743906">
        <id>Q96IT1</id>
    </interactant>
    <interactant intactId="EBI-10290053">
        <id>Q96JS3</id>
        <label>PGBD1</label>
    </interactant>
    <organismsDiffer>false</organismsDiffer>
    <experiments>6</experiments>
</comment>
<comment type="interaction">
    <interactant intactId="EBI-743906">
        <id>Q96IT1</id>
    </interactant>
    <interactant intactId="EBI-373337">
        <id>O76064</id>
        <label>RNF8</label>
    </interactant>
    <organismsDiffer>false</organismsDiffer>
    <experiments>3</experiments>
</comment>
<comment type="interaction">
    <interactant intactId="EBI-743906">
        <id>Q96IT1</id>
    </interactant>
    <interactant intactId="EBI-745846">
        <id>P57086</id>
        <label>SCAND1</label>
    </interactant>
    <organismsDiffer>false</organismsDiffer>
    <experiments>4</experiments>
</comment>
<comment type="interaction">
    <interactant intactId="EBI-743906">
        <id>Q96IT1</id>
    </interactant>
    <interactant intactId="EBI-5235340">
        <id>Q7Z699</id>
        <label>SPRED1</label>
    </interactant>
    <organismsDiffer>false</organismsDiffer>
    <experiments>3</experiments>
</comment>
<comment type="interaction">
    <interactant intactId="EBI-743906">
        <id>Q96IT1</id>
    </interactant>
    <interactant intactId="EBI-473220">
        <id>P61956</id>
        <label>SUMO2</label>
    </interactant>
    <organismsDiffer>false</organismsDiffer>
    <experiments>3</experiments>
</comment>
<comment type="interaction">
    <interactant intactId="EBI-743906">
        <id>Q96IT1</id>
    </interactant>
    <interactant intactId="EBI-474067">
        <id>P55854</id>
        <label>SUMO3</label>
    </interactant>
    <organismsDiffer>false</organismsDiffer>
    <experiments>3</experiments>
</comment>
<comment type="interaction">
    <interactant intactId="EBI-743906">
        <id>Q96IT1</id>
    </interactant>
    <interactant intactId="EBI-16431094">
        <id>A0A0S2Z6X0</id>
        <label>ZKSCAN4</label>
    </interactant>
    <organismsDiffer>false</organismsDiffer>
    <experiments>3</experiments>
</comment>
<comment type="interaction">
    <interactant intactId="EBI-743906">
        <id>Q96IT1</id>
    </interactant>
    <interactant intactId="EBI-2818641">
        <id>Q969J2</id>
        <label>ZKSCAN4</label>
    </interactant>
    <organismsDiffer>false</organismsDiffer>
    <experiments>10</experiments>
</comment>
<comment type="interaction">
    <interactant intactId="EBI-743906">
        <id>Q96IT1</id>
    </interactant>
    <interactant intactId="EBI-740232">
        <id>Q9NWS9-2</id>
        <label>ZNF446</label>
    </interactant>
    <organismsDiffer>false</organismsDiffer>
    <experiments>7</experiments>
</comment>
<comment type="interaction">
    <interactant intactId="EBI-743906">
        <id>Q96IT1</id>
    </interactant>
    <interactant intactId="EBI-10196963">
        <id>Q6P088</id>
        <label>ZNF483</label>
    </interactant>
    <organismsDiffer>false</organismsDiffer>
    <experiments>3</experiments>
</comment>
<comment type="interaction">
    <interactant intactId="EBI-743906">
        <id>Q96IT1</id>
    </interactant>
    <interactant intactId="EBI-1210440">
        <id>O43309</id>
        <label>ZSCAN12</label>
    </interactant>
    <organismsDiffer>false</organismsDiffer>
    <experiments>3</experiments>
</comment>
<comment type="interaction">
    <interactant intactId="EBI-743906">
        <id>Q96IT1</id>
    </interactant>
    <interactant intactId="EBI-10281938">
        <id>Q9Y5A6</id>
        <label>ZSCAN21</label>
    </interactant>
    <organismsDiffer>false</organismsDiffer>
    <experiments>6</experiments>
</comment>
<comment type="interaction">
    <interactant intactId="EBI-743906">
        <id>Q96IT1</id>
    </interactant>
    <interactant intactId="EBI-10178224">
        <id>P10073</id>
        <label>ZSCAN22</label>
    </interactant>
    <organismsDiffer>false</organismsDiffer>
    <experiments>7</experiments>
</comment>
<comment type="subcellular location">
    <subcellularLocation>
        <location evidence="4">Nucleus</location>
    </subcellularLocation>
</comment>
<comment type="alternative products">
    <event type="alternative splicing"/>
    <isoform>
        <id>Q96IT1-1</id>
        <name>1</name>
        <sequence type="displayed"/>
    </isoform>
    <isoform>
        <id>Q96IT1-2</id>
        <name>2</name>
        <sequence type="described" ref="VSP_038755"/>
    </isoform>
</comment>
<comment type="domain">
    <text evidence="1">The C2H2-type zinc finger 1, also named C2HR, mediates the interaction with NSD1.</text>
</comment>
<comment type="similarity">
    <text evidence="7">Belongs to the krueppel C2H2-type zinc-finger protein family.</text>
</comment>
<protein>
    <recommendedName>
        <fullName>Zinc finger protein 496</fullName>
    </recommendedName>
    <alternativeName>
        <fullName>Zinc finger protein with KRAB and SCAN domains 17</fullName>
    </alternativeName>
</protein>
<keyword id="KW-0010">Activator</keyword>
<keyword id="KW-0025">Alternative splicing</keyword>
<keyword id="KW-0238">DNA-binding</keyword>
<keyword id="KW-1017">Isopeptide bond</keyword>
<keyword id="KW-0479">Metal-binding</keyword>
<keyword id="KW-0539">Nucleus</keyword>
<keyword id="KW-0597">Phosphoprotein</keyword>
<keyword id="KW-1267">Proteomics identification</keyword>
<keyword id="KW-1185">Reference proteome</keyword>
<keyword id="KW-0677">Repeat</keyword>
<keyword id="KW-0678">Repressor</keyword>
<keyword id="KW-0804">Transcription</keyword>
<keyword id="KW-0805">Transcription regulation</keyword>
<keyword id="KW-0832">Ubl conjugation</keyword>
<keyword id="KW-0862">Zinc</keyword>
<keyword id="KW-0863">Zinc-finger</keyword>
<organism>
    <name type="scientific">Homo sapiens</name>
    <name type="common">Human</name>
    <dbReference type="NCBI Taxonomy" id="9606"/>
    <lineage>
        <taxon>Eukaryota</taxon>
        <taxon>Metazoa</taxon>
        <taxon>Chordata</taxon>
        <taxon>Craniata</taxon>
        <taxon>Vertebrata</taxon>
        <taxon>Euteleostomi</taxon>
        <taxon>Mammalia</taxon>
        <taxon>Eutheria</taxon>
        <taxon>Euarchontoglires</taxon>
        <taxon>Primates</taxon>
        <taxon>Haplorrhini</taxon>
        <taxon>Catarrhini</taxon>
        <taxon>Hominidae</taxon>
        <taxon>Homo</taxon>
    </lineage>
</organism>
<dbReference type="EMBL" id="AC104335">
    <property type="status" value="NOT_ANNOTATED_CDS"/>
    <property type="molecule type" value="Genomic_DNA"/>
</dbReference>
<dbReference type="EMBL" id="BC007263">
    <property type="protein sequence ID" value="AAH07263.1"/>
    <property type="molecule type" value="mRNA"/>
</dbReference>
<dbReference type="EMBL" id="BC025794">
    <property type="protein sequence ID" value="AAH25794.1"/>
    <property type="molecule type" value="mRNA"/>
</dbReference>
<dbReference type="CCDS" id="CCDS1631.1">
    <molecule id="Q96IT1-1"/>
</dbReference>
<dbReference type="RefSeq" id="NP_116141.1">
    <molecule id="Q96IT1-1"/>
    <property type="nucleotide sequence ID" value="NM_032752.3"/>
</dbReference>
<dbReference type="RefSeq" id="XP_005273385.1">
    <property type="nucleotide sequence ID" value="XM_005273328.3"/>
</dbReference>
<dbReference type="SMR" id="Q96IT1"/>
<dbReference type="BioGRID" id="124291">
    <property type="interactions" value="57"/>
</dbReference>
<dbReference type="FunCoup" id="Q96IT1">
    <property type="interactions" value="1548"/>
</dbReference>
<dbReference type="IntAct" id="Q96IT1">
    <property type="interactions" value="54"/>
</dbReference>
<dbReference type="MINT" id="Q96IT1"/>
<dbReference type="STRING" id="9606.ENSP00000294753"/>
<dbReference type="GlyGen" id="Q96IT1">
    <property type="glycosylation" value="1 site, 1 O-linked glycan (1 site)"/>
</dbReference>
<dbReference type="iPTMnet" id="Q96IT1"/>
<dbReference type="PhosphoSitePlus" id="Q96IT1"/>
<dbReference type="BioMuta" id="ZNF496"/>
<dbReference type="DMDM" id="55976755"/>
<dbReference type="jPOST" id="Q96IT1"/>
<dbReference type="MassIVE" id="Q96IT1"/>
<dbReference type="PaxDb" id="9606-ENSP00000294753"/>
<dbReference type="PeptideAtlas" id="Q96IT1"/>
<dbReference type="ProteomicsDB" id="76850">
    <molecule id="Q96IT1-1"/>
</dbReference>
<dbReference type="ProteomicsDB" id="76851">
    <molecule id="Q96IT1-2"/>
</dbReference>
<dbReference type="Pumba" id="Q96IT1"/>
<dbReference type="Antibodypedia" id="20839">
    <property type="antibodies" value="161 antibodies from 28 providers"/>
</dbReference>
<dbReference type="DNASU" id="84838"/>
<dbReference type="Ensembl" id="ENST00000294753.8">
    <molecule id="Q96IT1-1"/>
    <property type="protein sequence ID" value="ENSP00000294753.4"/>
    <property type="gene ID" value="ENSG00000162714.13"/>
</dbReference>
<dbReference type="Ensembl" id="ENST00000682384.1">
    <molecule id="Q96IT1-1"/>
    <property type="protein sequence ID" value="ENSP00000507236.1"/>
    <property type="gene ID" value="ENSG00000162714.13"/>
</dbReference>
<dbReference type="Ensembl" id="ENST00000709063.1">
    <molecule id="Q96IT1-1"/>
    <property type="protein sequence ID" value="ENSP00000517489.1"/>
    <property type="gene ID" value="ENSG00000291884.1"/>
</dbReference>
<dbReference type="Ensembl" id="ENST00000709067.1">
    <molecule id="Q96IT1-1"/>
    <property type="protein sequence ID" value="ENSP00000517491.1"/>
    <property type="gene ID" value="ENSG00000291884.1"/>
</dbReference>
<dbReference type="GeneID" id="84838"/>
<dbReference type="KEGG" id="hsa:84838"/>
<dbReference type="MANE-Select" id="ENST00000682384.1">
    <property type="protein sequence ID" value="ENSP00000507236.1"/>
    <property type="RefSeq nucleotide sequence ID" value="NM_032752.3"/>
    <property type="RefSeq protein sequence ID" value="NP_116141.1"/>
</dbReference>
<dbReference type="UCSC" id="uc001ico.4">
    <molecule id="Q96IT1-1"/>
    <property type="organism name" value="human"/>
</dbReference>
<dbReference type="AGR" id="HGNC:23713"/>
<dbReference type="CTD" id="84838"/>
<dbReference type="DisGeNET" id="84838"/>
<dbReference type="GeneCards" id="ZNF496"/>
<dbReference type="HGNC" id="HGNC:23713">
    <property type="gene designation" value="ZNF496"/>
</dbReference>
<dbReference type="HPA" id="ENSG00000162714">
    <property type="expression patterns" value="Low tissue specificity"/>
</dbReference>
<dbReference type="MIM" id="613911">
    <property type="type" value="gene"/>
</dbReference>
<dbReference type="neXtProt" id="NX_Q96IT1"/>
<dbReference type="OpenTargets" id="ENSG00000162714"/>
<dbReference type="PharmGKB" id="PA134888470"/>
<dbReference type="VEuPathDB" id="HostDB:ENSG00000162714"/>
<dbReference type="eggNOG" id="KOG1721">
    <property type="taxonomic scope" value="Eukaryota"/>
</dbReference>
<dbReference type="GeneTree" id="ENSGT00940000161967"/>
<dbReference type="HOGENOM" id="CLU_002678_49_8_1"/>
<dbReference type="InParanoid" id="Q96IT1"/>
<dbReference type="OMA" id="PWEIQSW"/>
<dbReference type="OrthoDB" id="6077919at2759"/>
<dbReference type="PAN-GO" id="Q96IT1">
    <property type="GO annotations" value="3 GO annotations based on evolutionary models"/>
</dbReference>
<dbReference type="PhylomeDB" id="Q96IT1"/>
<dbReference type="TreeFam" id="TF350829"/>
<dbReference type="PathwayCommons" id="Q96IT1"/>
<dbReference type="Reactome" id="R-HSA-212436">
    <property type="pathway name" value="Generic Transcription Pathway"/>
</dbReference>
<dbReference type="SignaLink" id="Q96IT1"/>
<dbReference type="BioGRID-ORCS" id="84838">
    <property type="hits" value="6 hits in 1177 CRISPR screens"/>
</dbReference>
<dbReference type="ChiTaRS" id="ZNF496">
    <property type="organism name" value="human"/>
</dbReference>
<dbReference type="GenomeRNAi" id="84838"/>
<dbReference type="Pharos" id="Q96IT1">
    <property type="development level" value="Tbio"/>
</dbReference>
<dbReference type="PRO" id="PR:Q96IT1"/>
<dbReference type="Proteomes" id="UP000005640">
    <property type="component" value="Chromosome 1"/>
</dbReference>
<dbReference type="RNAct" id="Q96IT1">
    <property type="molecule type" value="protein"/>
</dbReference>
<dbReference type="Bgee" id="ENSG00000162714">
    <property type="expression patterns" value="Expressed in sural nerve and 169 other cell types or tissues"/>
</dbReference>
<dbReference type="ExpressionAtlas" id="Q96IT1">
    <property type="expression patterns" value="baseline and differential"/>
</dbReference>
<dbReference type="GO" id="GO:0005634">
    <property type="term" value="C:nucleus"/>
    <property type="evidence" value="ECO:0000250"/>
    <property type="project" value="UniProtKB"/>
</dbReference>
<dbReference type="GO" id="GO:0003677">
    <property type="term" value="F:DNA binding"/>
    <property type="evidence" value="ECO:0000250"/>
    <property type="project" value="UniProtKB"/>
</dbReference>
<dbReference type="GO" id="GO:0000981">
    <property type="term" value="F:DNA-binding transcription factor activity, RNA polymerase II-specific"/>
    <property type="evidence" value="ECO:0000318"/>
    <property type="project" value="GO_Central"/>
</dbReference>
<dbReference type="GO" id="GO:0000978">
    <property type="term" value="F:RNA polymerase II cis-regulatory region sequence-specific DNA binding"/>
    <property type="evidence" value="ECO:0000318"/>
    <property type="project" value="GO_Central"/>
</dbReference>
<dbReference type="GO" id="GO:0008270">
    <property type="term" value="F:zinc ion binding"/>
    <property type="evidence" value="ECO:0007669"/>
    <property type="project" value="UniProtKB-KW"/>
</dbReference>
<dbReference type="GO" id="GO:0045893">
    <property type="term" value="P:positive regulation of DNA-templated transcription"/>
    <property type="evidence" value="ECO:0000250"/>
    <property type="project" value="UniProtKB"/>
</dbReference>
<dbReference type="GO" id="GO:0006357">
    <property type="term" value="P:regulation of transcription by RNA polymerase II"/>
    <property type="evidence" value="ECO:0000318"/>
    <property type="project" value="GO_Central"/>
</dbReference>
<dbReference type="CDD" id="cd07765">
    <property type="entry name" value="KRAB_A-box"/>
    <property type="match status" value="1"/>
</dbReference>
<dbReference type="CDD" id="cd07936">
    <property type="entry name" value="SCAN"/>
    <property type="match status" value="1"/>
</dbReference>
<dbReference type="FunFam" id="3.30.160.60:FF:005126">
    <property type="match status" value="1"/>
</dbReference>
<dbReference type="FunFam" id="1.10.4020.10:FF:000001">
    <property type="entry name" value="zinc finger protein 263 isoform X1"/>
    <property type="match status" value="1"/>
</dbReference>
<dbReference type="FunFam" id="3.30.160.60:FF:001511">
    <property type="entry name" value="Zinc finger protein 496"/>
    <property type="match status" value="1"/>
</dbReference>
<dbReference type="FunFam" id="3.30.160.60:FF:001512">
    <property type="entry name" value="Zinc finger protein 496"/>
    <property type="match status" value="1"/>
</dbReference>
<dbReference type="FunFam" id="3.30.160.60:FF:001758">
    <property type="entry name" value="Zinc finger protein 496"/>
    <property type="match status" value="1"/>
</dbReference>
<dbReference type="Gene3D" id="3.30.160.60">
    <property type="entry name" value="Classic Zinc Finger"/>
    <property type="match status" value="4"/>
</dbReference>
<dbReference type="Gene3D" id="1.10.4020.10">
    <property type="entry name" value="DNA breaking-rejoining enzymes"/>
    <property type="match status" value="1"/>
</dbReference>
<dbReference type="InterPro" id="IPR001909">
    <property type="entry name" value="KRAB"/>
</dbReference>
<dbReference type="InterPro" id="IPR036051">
    <property type="entry name" value="KRAB_dom_sf"/>
</dbReference>
<dbReference type="InterPro" id="IPR003309">
    <property type="entry name" value="SCAN_dom"/>
</dbReference>
<dbReference type="InterPro" id="IPR038269">
    <property type="entry name" value="SCAN_sf"/>
</dbReference>
<dbReference type="InterPro" id="IPR036236">
    <property type="entry name" value="Znf_C2H2_sf"/>
</dbReference>
<dbReference type="InterPro" id="IPR013087">
    <property type="entry name" value="Znf_C2H2_type"/>
</dbReference>
<dbReference type="PANTHER" id="PTHR23226">
    <property type="entry name" value="ZINC FINGER AND SCAN DOMAIN-CONTAINING"/>
    <property type="match status" value="1"/>
</dbReference>
<dbReference type="PANTHER" id="PTHR23226:SF180">
    <property type="entry name" value="ZINC FINGER PROTEIN 496"/>
    <property type="match status" value="1"/>
</dbReference>
<dbReference type="Pfam" id="PF01352">
    <property type="entry name" value="KRAB"/>
    <property type="match status" value="1"/>
</dbReference>
<dbReference type="Pfam" id="PF02023">
    <property type="entry name" value="SCAN"/>
    <property type="match status" value="1"/>
</dbReference>
<dbReference type="Pfam" id="PF00096">
    <property type="entry name" value="zf-C2H2"/>
    <property type="match status" value="3"/>
</dbReference>
<dbReference type="SMART" id="SM00431">
    <property type="entry name" value="SCAN"/>
    <property type="match status" value="1"/>
</dbReference>
<dbReference type="SMART" id="SM00355">
    <property type="entry name" value="ZnF_C2H2"/>
    <property type="match status" value="5"/>
</dbReference>
<dbReference type="SUPFAM" id="SSF57667">
    <property type="entry name" value="beta-beta-alpha zinc fingers"/>
    <property type="match status" value="3"/>
</dbReference>
<dbReference type="SUPFAM" id="SSF109640">
    <property type="entry name" value="KRAB domain (Kruppel-associated box)"/>
    <property type="match status" value="1"/>
</dbReference>
<dbReference type="SUPFAM" id="SSF47353">
    <property type="entry name" value="Retrovirus capsid dimerization domain-like"/>
    <property type="match status" value="1"/>
</dbReference>
<dbReference type="PROSITE" id="PS50805">
    <property type="entry name" value="KRAB"/>
    <property type="match status" value="1"/>
</dbReference>
<dbReference type="PROSITE" id="PS50804">
    <property type="entry name" value="SCAN_BOX"/>
    <property type="match status" value="1"/>
</dbReference>
<dbReference type="PROSITE" id="PS00028">
    <property type="entry name" value="ZINC_FINGER_C2H2_1"/>
    <property type="match status" value="4"/>
</dbReference>
<dbReference type="PROSITE" id="PS50157">
    <property type="entry name" value="ZINC_FINGER_C2H2_2"/>
    <property type="match status" value="5"/>
</dbReference>
<feature type="chain" id="PRO_0000047617" description="Zinc finger protein 496">
    <location>
        <begin position="1"/>
        <end position="587"/>
    </location>
</feature>
<feature type="domain" description="SCAN box" evidence="4">
    <location>
        <begin position="42"/>
        <end position="124"/>
    </location>
</feature>
<feature type="domain" description="KRAB" evidence="3">
    <location>
        <begin position="221"/>
        <end position="291"/>
    </location>
</feature>
<feature type="zinc finger region" description="C2H2-type 1; degenerate" evidence="2">
    <location>
        <begin position="406"/>
        <end position="428"/>
    </location>
</feature>
<feature type="zinc finger region" description="C2H2-type 2" evidence="2">
    <location>
        <begin position="435"/>
        <end position="457"/>
    </location>
</feature>
<feature type="zinc finger region" description="C2H2-type 3" evidence="2">
    <location>
        <begin position="463"/>
        <end position="485"/>
    </location>
</feature>
<feature type="zinc finger region" description="C2H2-type 4" evidence="2">
    <location>
        <begin position="522"/>
        <end position="545"/>
    </location>
</feature>
<feature type="zinc finger region" description="C2H2-type 5" evidence="2">
    <location>
        <begin position="553"/>
        <end position="575"/>
    </location>
</feature>
<feature type="region of interest" description="Disordered" evidence="5">
    <location>
        <begin position="1"/>
        <end position="40"/>
    </location>
</feature>
<feature type="region of interest" description="Disordered" evidence="5">
    <location>
        <begin position="260"/>
        <end position="282"/>
    </location>
</feature>
<feature type="region of interest" description="Disordered" evidence="5">
    <location>
        <begin position="358"/>
        <end position="399"/>
    </location>
</feature>
<feature type="region of interest" description="Disordered" evidence="5">
    <location>
        <begin position="488"/>
        <end position="513"/>
    </location>
</feature>
<feature type="compositionally biased region" description="Basic and acidic residues" evidence="5">
    <location>
        <begin position="11"/>
        <end position="20"/>
    </location>
</feature>
<feature type="compositionally biased region" description="Polar residues" evidence="5">
    <location>
        <begin position="389"/>
        <end position="399"/>
    </location>
</feature>
<feature type="modified residue" description="Phosphoserine" evidence="8">
    <location>
        <position position="185"/>
    </location>
</feature>
<feature type="modified residue" description="Phosphoserine" evidence="9">
    <location>
        <position position="299"/>
    </location>
</feature>
<feature type="cross-link" description="Glycyl lysine isopeptide (Lys-Gly) (interchain with G-Cter in SUMO2)" evidence="10">
    <location>
        <position position="13"/>
    </location>
</feature>
<feature type="cross-link" description="Glycyl lysine isopeptide (Lys-Gly) (interchain with G-Cter in SUMO2)" evidence="10">
    <location>
        <position position="403"/>
    </location>
</feature>
<feature type="cross-link" description="Glycyl lysine isopeptide (Lys-Gly) (interchain with G-Cter in SUMO2)" evidence="10">
    <location>
        <position position="496"/>
    </location>
</feature>
<feature type="splice variant" id="VSP_038755" description="In isoform 2." evidence="6">
    <original>P</original>
    <variation>PRIFQFNNHRSNGYILEMLGSGGKKAQIISVLSQIYV</variation>
    <location>
        <position position="217"/>
    </location>
</feature>
<evidence type="ECO:0000250" key="1"/>
<evidence type="ECO:0000255" key="2">
    <source>
        <dbReference type="PROSITE-ProRule" id="PRU00042"/>
    </source>
</evidence>
<evidence type="ECO:0000255" key="3">
    <source>
        <dbReference type="PROSITE-ProRule" id="PRU00119"/>
    </source>
</evidence>
<evidence type="ECO:0000255" key="4">
    <source>
        <dbReference type="PROSITE-ProRule" id="PRU00187"/>
    </source>
</evidence>
<evidence type="ECO:0000256" key="5">
    <source>
        <dbReference type="SAM" id="MobiDB-lite"/>
    </source>
</evidence>
<evidence type="ECO:0000303" key="6">
    <source>
    </source>
</evidence>
<evidence type="ECO:0000305" key="7"/>
<evidence type="ECO:0007744" key="8">
    <source>
    </source>
</evidence>
<evidence type="ECO:0007744" key="9">
    <source>
    </source>
</evidence>
<evidence type="ECO:0007744" key="10">
    <source>
    </source>
</evidence>
<gene>
    <name type="primary">ZNF496</name>
    <name type="synonym">ZKSCAN17</name>
</gene>
<reference key="1">
    <citation type="journal article" date="2006" name="Nature">
        <title>The DNA sequence and biological annotation of human chromosome 1.</title>
        <authorList>
            <person name="Gregory S.G."/>
            <person name="Barlow K.F."/>
            <person name="McLay K.E."/>
            <person name="Kaul R."/>
            <person name="Swarbreck D."/>
            <person name="Dunham A."/>
            <person name="Scott C.E."/>
            <person name="Howe K.L."/>
            <person name="Woodfine K."/>
            <person name="Spencer C.C.A."/>
            <person name="Jones M.C."/>
            <person name="Gillson C."/>
            <person name="Searle S."/>
            <person name="Zhou Y."/>
            <person name="Kokocinski F."/>
            <person name="McDonald L."/>
            <person name="Evans R."/>
            <person name="Phillips K."/>
            <person name="Atkinson A."/>
            <person name="Cooper R."/>
            <person name="Jones C."/>
            <person name="Hall R.E."/>
            <person name="Andrews T.D."/>
            <person name="Lloyd C."/>
            <person name="Ainscough R."/>
            <person name="Almeida J.P."/>
            <person name="Ambrose K.D."/>
            <person name="Anderson F."/>
            <person name="Andrew R.W."/>
            <person name="Ashwell R.I.S."/>
            <person name="Aubin K."/>
            <person name="Babbage A.K."/>
            <person name="Bagguley C.L."/>
            <person name="Bailey J."/>
            <person name="Beasley H."/>
            <person name="Bethel G."/>
            <person name="Bird C.P."/>
            <person name="Bray-Allen S."/>
            <person name="Brown J.Y."/>
            <person name="Brown A.J."/>
            <person name="Buckley D."/>
            <person name="Burton J."/>
            <person name="Bye J."/>
            <person name="Carder C."/>
            <person name="Chapman J.C."/>
            <person name="Clark S.Y."/>
            <person name="Clarke G."/>
            <person name="Clee C."/>
            <person name="Cobley V."/>
            <person name="Collier R.E."/>
            <person name="Corby N."/>
            <person name="Coville G.J."/>
            <person name="Davies J."/>
            <person name="Deadman R."/>
            <person name="Dunn M."/>
            <person name="Earthrowl M."/>
            <person name="Ellington A.G."/>
            <person name="Errington H."/>
            <person name="Frankish A."/>
            <person name="Frankland J."/>
            <person name="French L."/>
            <person name="Garner P."/>
            <person name="Garnett J."/>
            <person name="Gay L."/>
            <person name="Ghori M.R.J."/>
            <person name="Gibson R."/>
            <person name="Gilby L.M."/>
            <person name="Gillett W."/>
            <person name="Glithero R.J."/>
            <person name="Grafham D.V."/>
            <person name="Griffiths C."/>
            <person name="Griffiths-Jones S."/>
            <person name="Grocock R."/>
            <person name="Hammond S."/>
            <person name="Harrison E.S.I."/>
            <person name="Hart E."/>
            <person name="Haugen E."/>
            <person name="Heath P.D."/>
            <person name="Holmes S."/>
            <person name="Holt K."/>
            <person name="Howden P.J."/>
            <person name="Hunt A.R."/>
            <person name="Hunt S.E."/>
            <person name="Hunter G."/>
            <person name="Isherwood J."/>
            <person name="James R."/>
            <person name="Johnson C."/>
            <person name="Johnson D."/>
            <person name="Joy A."/>
            <person name="Kay M."/>
            <person name="Kershaw J.K."/>
            <person name="Kibukawa M."/>
            <person name="Kimberley A.M."/>
            <person name="King A."/>
            <person name="Knights A.J."/>
            <person name="Lad H."/>
            <person name="Laird G."/>
            <person name="Lawlor S."/>
            <person name="Leongamornlert D.A."/>
            <person name="Lloyd D.M."/>
            <person name="Loveland J."/>
            <person name="Lovell J."/>
            <person name="Lush M.J."/>
            <person name="Lyne R."/>
            <person name="Martin S."/>
            <person name="Mashreghi-Mohammadi M."/>
            <person name="Matthews L."/>
            <person name="Matthews N.S.W."/>
            <person name="McLaren S."/>
            <person name="Milne S."/>
            <person name="Mistry S."/>
            <person name="Moore M.J.F."/>
            <person name="Nickerson T."/>
            <person name="O'Dell C.N."/>
            <person name="Oliver K."/>
            <person name="Palmeiri A."/>
            <person name="Palmer S.A."/>
            <person name="Parker A."/>
            <person name="Patel D."/>
            <person name="Pearce A.V."/>
            <person name="Peck A.I."/>
            <person name="Pelan S."/>
            <person name="Phelps K."/>
            <person name="Phillimore B.J."/>
            <person name="Plumb R."/>
            <person name="Rajan J."/>
            <person name="Raymond C."/>
            <person name="Rouse G."/>
            <person name="Saenphimmachak C."/>
            <person name="Sehra H.K."/>
            <person name="Sheridan E."/>
            <person name="Shownkeen R."/>
            <person name="Sims S."/>
            <person name="Skuce C.D."/>
            <person name="Smith M."/>
            <person name="Steward C."/>
            <person name="Subramanian S."/>
            <person name="Sycamore N."/>
            <person name="Tracey A."/>
            <person name="Tromans A."/>
            <person name="Van Helmond Z."/>
            <person name="Wall M."/>
            <person name="Wallis J.M."/>
            <person name="White S."/>
            <person name="Whitehead S.L."/>
            <person name="Wilkinson J.E."/>
            <person name="Willey D.L."/>
            <person name="Williams H."/>
            <person name="Wilming L."/>
            <person name="Wray P.W."/>
            <person name="Wu Z."/>
            <person name="Coulson A."/>
            <person name="Vaudin M."/>
            <person name="Sulston J.E."/>
            <person name="Durbin R.M."/>
            <person name="Hubbard T."/>
            <person name="Wooster R."/>
            <person name="Dunham I."/>
            <person name="Carter N.P."/>
            <person name="McVean G."/>
            <person name="Ross M.T."/>
            <person name="Harrow J."/>
            <person name="Olson M.V."/>
            <person name="Beck S."/>
            <person name="Rogers J."/>
            <person name="Bentley D.R."/>
        </authorList>
    </citation>
    <scope>NUCLEOTIDE SEQUENCE [LARGE SCALE GENOMIC DNA]</scope>
</reference>
<reference key="2">
    <citation type="journal article" date="2004" name="Genome Res.">
        <title>The status, quality, and expansion of the NIH full-length cDNA project: the Mammalian Gene Collection (MGC).</title>
        <authorList>
            <consortium name="The MGC Project Team"/>
        </authorList>
    </citation>
    <scope>NUCLEOTIDE SEQUENCE [LARGE SCALE MRNA] (ISOFORM 1)</scope>
    <scope>NUCLEOTIDE SEQUENCE [LARGE SCALE MRNA] OF 112-587 (ISOFORM 2)</scope>
    <source>
        <tissue>Colon</tissue>
        <tissue>Lung</tissue>
    </source>
</reference>
<reference key="3">
    <citation type="journal article" date="2008" name="J. Proteome Res.">
        <title>Combining protein-based IMAC, peptide-based IMAC, and MudPIT for efficient phosphoproteomic analysis.</title>
        <authorList>
            <person name="Cantin G.T."/>
            <person name="Yi W."/>
            <person name="Lu B."/>
            <person name="Park S.K."/>
            <person name="Xu T."/>
            <person name="Lee J.-D."/>
            <person name="Yates J.R. III"/>
        </authorList>
    </citation>
    <scope>PHOSPHORYLATION [LARGE SCALE ANALYSIS] AT SER-185</scope>
    <scope>IDENTIFICATION BY MASS SPECTROMETRY [LARGE SCALE ANALYSIS]</scope>
    <source>
        <tissue>Cervix carcinoma</tissue>
    </source>
</reference>
<reference key="4">
    <citation type="journal article" date="2009" name="Sci. Signal.">
        <title>Quantitative phosphoproteomic analysis of T cell receptor signaling reveals system-wide modulation of protein-protein interactions.</title>
        <authorList>
            <person name="Mayya V."/>
            <person name="Lundgren D.H."/>
            <person name="Hwang S.-I."/>
            <person name="Rezaul K."/>
            <person name="Wu L."/>
            <person name="Eng J.K."/>
            <person name="Rodionov V."/>
            <person name="Han D.K."/>
        </authorList>
    </citation>
    <scope>PHOSPHORYLATION [LARGE SCALE ANALYSIS] AT SER-299</scope>
    <scope>IDENTIFICATION BY MASS SPECTROMETRY [LARGE SCALE ANALYSIS]</scope>
    <source>
        <tissue>Leukemic T-cell</tissue>
    </source>
</reference>
<reference key="5">
    <citation type="journal article" date="2017" name="Nat. Struct. Mol. Biol.">
        <title>Site-specific mapping of the human SUMO proteome reveals co-modification with phosphorylation.</title>
        <authorList>
            <person name="Hendriks I.A."/>
            <person name="Lyon D."/>
            <person name="Young C."/>
            <person name="Jensen L.J."/>
            <person name="Vertegaal A.C."/>
            <person name="Nielsen M.L."/>
        </authorList>
    </citation>
    <scope>SUMOYLATION [LARGE SCALE ANALYSIS] AT LYS-13; LYS-403 AND LYS-496</scope>
    <scope>IDENTIFICATION BY MASS SPECTROMETRY [LARGE SCALE ANALYSIS]</scope>
</reference>
<sequence length="587" mass="66908">MPTALCPRVLAPKESEEPRKMRSPPGENPSPQGELPSPESSRRLFRRFRYQEAAGPREALQRLWDLCGGWLRPERHTKEQILELLVLEQFLAILPREIQSWVRAQEPESGEQAVAAVEALEREPGRPWQWLKHCEDPVVIDDGDSPLDQEQEQLPVEPHSDLAKNQDAQPITLAQCLGLPSRPPSQLSGDPVLQDAFLLQEENVRDTQQVTTLQLPPSRVSPFKDMILCFSEEDWSLLDPAQTGFYGEFIIGEDYGVSMPPNDLAAQPDLSQGEENEPRVPELQDLQGKEVPQVSYLDSPSLQPFQVEERRKREELQVPEFQACPQTVVPQNTYPAGGNPRSLENSLDEEVTIEIVLSSSGDEDSQHGPYCTEELGSPTEKQRSLPASHRSSTEAGGEVQTSKKSYVCPNCGKIFRWRVNFIRHLRSRREQEKPHECSVCGELFSDSEDLDGHLESHEAQKPYRCGACGKSFRLNSHLLSHRRIHLQPDRLQPVEKREQAASEDADKGPKEPLENGKAKLSFQCCECGKAFQRHDHLARHRSHFHLKDKARPFQCRYCVKSFTQNYDLLRHERLHMKRRSKQALNSY</sequence>
<name>ZN496_HUMAN</name>